<proteinExistence type="inferred from homology"/>
<name>PNP_BACCR</name>
<comment type="function">
    <text evidence="1">Involved in mRNA degradation. Catalyzes the phosphorolysis of single-stranded polyribonucleotides processively in the 3'- to 5'-direction.</text>
</comment>
<comment type="catalytic activity">
    <reaction evidence="1">
        <text>RNA(n+1) + phosphate = RNA(n) + a ribonucleoside 5'-diphosphate</text>
        <dbReference type="Rhea" id="RHEA:22096"/>
        <dbReference type="Rhea" id="RHEA-COMP:14527"/>
        <dbReference type="Rhea" id="RHEA-COMP:17342"/>
        <dbReference type="ChEBI" id="CHEBI:43474"/>
        <dbReference type="ChEBI" id="CHEBI:57930"/>
        <dbReference type="ChEBI" id="CHEBI:140395"/>
        <dbReference type="EC" id="2.7.7.8"/>
    </reaction>
</comment>
<comment type="cofactor">
    <cofactor evidence="1">
        <name>Mg(2+)</name>
        <dbReference type="ChEBI" id="CHEBI:18420"/>
    </cofactor>
</comment>
<comment type="subcellular location">
    <subcellularLocation>
        <location evidence="1">Cytoplasm</location>
    </subcellularLocation>
</comment>
<comment type="similarity">
    <text evidence="1">Belongs to the polyribonucleotide nucleotidyltransferase family.</text>
</comment>
<evidence type="ECO:0000255" key="1">
    <source>
        <dbReference type="HAMAP-Rule" id="MF_01595"/>
    </source>
</evidence>
<organism>
    <name type="scientific">Bacillus cereus (strain ATCC 14579 / DSM 31 / CCUG 7414 / JCM 2152 / NBRC 15305 / NCIMB 9373 / NCTC 2599 / NRRL B-3711)</name>
    <dbReference type="NCBI Taxonomy" id="226900"/>
    <lineage>
        <taxon>Bacteria</taxon>
        <taxon>Bacillati</taxon>
        <taxon>Bacillota</taxon>
        <taxon>Bacilli</taxon>
        <taxon>Bacillales</taxon>
        <taxon>Bacillaceae</taxon>
        <taxon>Bacillus</taxon>
        <taxon>Bacillus cereus group</taxon>
    </lineage>
</organism>
<feature type="chain" id="PRO_0000329513" description="Polyribonucleotide nucleotidyltransferase">
    <location>
        <begin position="1"/>
        <end position="712"/>
    </location>
</feature>
<feature type="domain" description="KH" evidence="1">
    <location>
        <begin position="554"/>
        <end position="613"/>
    </location>
</feature>
<feature type="domain" description="S1 motif" evidence="1">
    <location>
        <begin position="623"/>
        <end position="691"/>
    </location>
</feature>
<feature type="binding site" evidence="1">
    <location>
        <position position="487"/>
    </location>
    <ligand>
        <name>Mg(2+)</name>
        <dbReference type="ChEBI" id="CHEBI:18420"/>
    </ligand>
</feature>
<feature type="binding site" evidence="1">
    <location>
        <position position="493"/>
    </location>
    <ligand>
        <name>Mg(2+)</name>
        <dbReference type="ChEBI" id="CHEBI:18420"/>
    </ligand>
</feature>
<protein>
    <recommendedName>
        <fullName evidence="1">Polyribonucleotide nucleotidyltransferase</fullName>
        <ecNumber evidence="1">2.7.7.8</ecNumber>
    </recommendedName>
    <alternativeName>
        <fullName evidence="1">Polynucleotide phosphorylase</fullName>
        <shortName evidence="1">PNPase</shortName>
    </alternativeName>
</protein>
<dbReference type="EC" id="2.7.7.8" evidence="1"/>
<dbReference type="EMBL" id="AE016877">
    <property type="protein sequence ID" value="AAP10728.1"/>
    <property type="molecule type" value="Genomic_DNA"/>
</dbReference>
<dbReference type="RefSeq" id="NP_833527.1">
    <property type="nucleotide sequence ID" value="NC_004722.1"/>
</dbReference>
<dbReference type="RefSeq" id="WP_000076736.1">
    <property type="nucleotide sequence ID" value="NC_004722.1"/>
</dbReference>
<dbReference type="SMR" id="Q819Z1"/>
<dbReference type="STRING" id="226900.BC_3805"/>
<dbReference type="KEGG" id="bce:BC3805"/>
<dbReference type="PATRIC" id="fig|226900.8.peg.3922"/>
<dbReference type="HOGENOM" id="CLU_004217_2_2_9"/>
<dbReference type="Proteomes" id="UP000001417">
    <property type="component" value="Chromosome"/>
</dbReference>
<dbReference type="GO" id="GO:0005829">
    <property type="term" value="C:cytosol"/>
    <property type="evidence" value="ECO:0000318"/>
    <property type="project" value="GO_Central"/>
</dbReference>
<dbReference type="GO" id="GO:0000175">
    <property type="term" value="F:3'-5'-RNA exonuclease activity"/>
    <property type="evidence" value="ECO:0000318"/>
    <property type="project" value="GO_Central"/>
</dbReference>
<dbReference type="GO" id="GO:0000287">
    <property type="term" value="F:magnesium ion binding"/>
    <property type="evidence" value="ECO:0007669"/>
    <property type="project" value="UniProtKB-UniRule"/>
</dbReference>
<dbReference type="GO" id="GO:0004654">
    <property type="term" value="F:polyribonucleotide nucleotidyltransferase activity"/>
    <property type="evidence" value="ECO:0000318"/>
    <property type="project" value="GO_Central"/>
</dbReference>
<dbReference type="GO" id="GO:0003723">
    <property type="term" value="F:RNA binding"/>
    <property type="evidence" value="ECO:0007669"/>
    <property type="project" value="UniProtKB-UniRule"/>
</dbReference>
<dbReference type="GO" id="GO:0006402">
    <property type="term" value="P:mRNA catabolic process"/>
    <property type="evidence" value="ECO:0007669"/>
    <property type="project" value="UniProtKB-UniRule"/>
</dbReference>
<dbReference type="GO" id="GO:0006401">
    <property type="term" value="P:RNA catabolic process"/>
    <property type="evidence" value="ECO:0000318"/>
    <property type="project" value="GO_Central"/>
</dbReference>
<dbReference type="GO" id="GO:0006396">
    <property type="term" value="P:RNA processing"/>
    <property type="evidence" value="ECO:0007669"/>
    <property type="project" value="InterPro"/>
</dbReference>
<dbReference type="CDD" id="cd02393">
    <property type="entry name" value="KH-I_PNPase"/>
    <property type="match status" value="1"/>
</dbReference>
<dbReference type="CDD" id="cd11363">
    <property type="entry name" value="RNase_PH_PNPase_1"/>
    <property type="match status" value="1"/>
</dbReference>
<dbReference type="CDD" id="cd11364">
    <property type="entry name" value="RNase_PH_PNPase_2"/>
    <property type="match status" value="1"/>
</dbReference>
<dbReference type="CDD" id="cd04472">
    <property type="entry name" value="S1_PNPase"/>
    <property type="match status" value="1"/>
</dbReference>
<dbReference type="FunFam" id="2.40.50.140:FF:000023">
    <property type="entry name" value="Polyribonucleotide nucleotidyltransferase"/>
    <property type="match status" value="1"/>
</dbReference>
<dbReference type="FunFam" id="3.30.1370.10:FF:000001">
    <property type="entry name" value="Polyribonucleotide nucleotidyltransferase"/>
    <property type="match status" value="1"/>
</dbReference>
<dbReference type="FunFam" id="3.30.230.70:FF:000001">
    <property type="entry name" value="Polyribonucleotide nucleotidyltransferase"/>
    <property type="match status" value="1"/>
</dbReference>
<dbReference type="FunFam" id="3.30.230.70:FF:000002">
    <property type="entry name" value="Polyribonucleotide nucleotidyltransferase"/>
    <property type="match status" value="1"/>
</dbReference>
<dbReference type="Gene3D" id="3.30.230.70">
    <property type="entry name" value="GHMP Kinase, N-terminal domain"/>
    <property type="match status" value="2"/>
</dbReference>
<dbReference type="Gene3D" id="3.30.1370.10">
    <property type="entry name" value="K Homology domain, type 1"/>
    <property type="match status" value="1"/>
</dbReference>
<dbReference type="Gene3D" id="2.40.50.140">
    <property type="entry name" value="Nucleic acid-binding proteins"/>
    <property type="match status" value="1"/>
</dbReference>
<dbReference type="HAMAP" id="MF_01595">
    <property type="entry name" value="PNPase"/>
    <property type="match status" value="1"/>
</dbReference>
<dbReference type="InterPro" id="IPR001247">
    <property type="entry name" value="ExoRNase_PH_dom1"/>
</dbReference>
<dbReference type="InterPro" id="IPR015847">
    <property type="entry name" value="ExoRNase_PH_dom2"/>
</dbReference>
<dbReference type="InterPro" id="IPR036345">
    <property type="entry name" value="ExoRNase_PH_dom2_sf"/>
</dbReference>
<dbReference type="InterPro" id="IPR004087">
    <property type="entry name" value="KH_dom"/>
</dbReference>
<dbReference type="InterPro" id="IPR004088">
    <property type="entry name" value="KH_dom_type_1"/>
</dbReference>
<dbReference type="InterPro" id="IPR036612">
    <property type="entry name" value="KH_dom_type_1_sf"/>
</dbReference>
<dbReference type="InterPro" id="IPR012340">
    <property type="entry name" value="NA-bd_OB-fold"/>
</dbReference>
<dbReference type="InterPro" id="IPR012162">
    <property type="entry name" value="PNPase"/>
</dbReference>
<dbReference type="InterPro" id="IPR027408">
    <property type="entry name" value="PNPase/RNase_PH_dom_sf"/>
</dbReference>
<dbReference type="InterPro" id="IPR015848">
    <property type="entry name" value="PNPase_PH_RNA-bd_bac/org-type"/>
</dbReference>
<dbReference type="InterPro" id="IPR020568">
    <property type="entry name" value="Ribosomal_Su5_D2-typ_SF"/>
</dbReference>
<dbReference type="InterPro" id="IPR003029">
    <property type="entry name" value="S1_domain"/>
</dbReference>
<dbReference type="NCBIfam" id="TIGR03591">
    <property type="entry name" value="polynuc_phos"/>
    <property type="match status" value="1"/>
</dbReference>
<dbReference type="NCBIfam" id="NF008805">
    <property type="entry name" value="PRK11824.1"/>
    <property type="match status" value="1"/>
</dbReference>
<dbReference type="PANTHER" id="PTHR11252">
    <property type="entry name" value="POLYRIBONUCLEOTIDE NUCLEOTIDYLTRANSFERASE"/>
    <property type="match status" value="1"/>
</dbReference>
<dbReference type="PANTHER" id="PTHR11252:SF0">
    <property type="entry name" value="POLYRIBONUCLEOTIDE NUCLEOTIDYLTRANSFERASE 1, MITOCHONDRIAL"/>
    <property type="match status" value="1"/>
</dbReference>
<dbReference type="Pfam" id="PF00013">
    <property type="entry name" value="KH_1"/>
    <property type="match status" value="1"/>
</dbReference>
<dbReference type="Pfam" id="PF03726">
    <property type="entry name" value="PNPase"/>
    <property type="match status" value="1"/>
</dbReference>
<dbReference type="Pfam" id="PF01138">
    <property type="entry name" value="RNase_PH"/>
    <property type="match status" value="2"/>
</dbReference>
<dbReference type="Pfam" id="PF03725">
    <property type="entry name" value="RNase_PH_C"/>
    <property type="match status" value="2"/>
</dbReference>
<dbReference type="Pfam" id="PF00575">
    <property type="entry name" value="S1"/>
    <property type="match status" value="1"/>
</dbReference>
<dbReference type="PIRSF" id="PIRSF005499">
    <property type="entry name" value="PNPase"/>
    <property type="match status" value="1"/>
</dbReference>
<dbReference type="SMART" id="SM00322">
    <property type="entry name" value="KH"/>
    <property type="match status" value="1"/>
</dbReference>
<dbReference type="SMART" id="SM00316">
    <property type="entry name" value="S1"/>
    <property type="match status" value="1"/>
</dbReference>
<dbReference type="SUPFAM" id="SSF54791">
    <property type="entry name" value="Eukaryotic type KH-domain (KH-domain type I)"/>
    <property type="match status" value="1"/>
</dbReference>
<dbReference type="SUPFAM" id="SSF50249">
    <property type="entry name" value="Nucleic acid-binding proteins"/>
    <property type="match status" value="1"/>
</dbReference>
<dbReference type="SUPFAM" id="SSF55666">
    <property type="entry name" value="Ribonuclease PH domain 2-like"/>
    <property type="match status" value="2"/>
</dbReference>
<dbReference type="SUPFAM" id="SSF54211">
    <property type="entry name" value="Ribosomal protein S5 domain 2-like"/>
    <property type="match status" value="2"/>
</dbReference>
<dbReference type="PROSITE" id="PS50084">
    <property type="entry name" value="KH_TYPE_1"/>
    <property type="match status" value="1"/>
</dbReference>
<dbReference type="PROSITE" id="PS50126">
    <property type="entry name" value="S1"/>
    <property type="match status" value="1"/>
</dbReference>
<gene>
    <name evidence="1" type="primary">pnp</name>
    <name type="ordered locus">BC_3805</name>
</gene>
<keyword id="KW-0963">Cytoplasm</keyword>
<keyword id="KW-0460">Magnesium</keyword>
<keyword id="KW-0479">Metal-binding</keyword>
<keyword id="KW-0548">Nucleotidyltransferase</keyword>
<keyword id="KW-1185">Reference proteome</keyword>
<keyword id="KW-0694">RNA-binding</keyword>
<keyword id="KW-0808">Transferase</keyword>
<accession>Q819Z1</accession>
<sequence>MSQEKQVFSIDLAGRQLTVETGQLAKQANGAVLVRYGDTAVLSTATASKEAKNVDFFPLTVNYEERLYAVGKIPGGFIKREGRPSEKAILASRLIDRPIRPLFADGFRNEVQVVSIVMSVDQDCSSEMAAMLGSSLALSISDIPFEGPIAGATVGRINGEFVINPTVEQQEQSDIHLVVAGTKDAINMVEAGADQVPEETMLEAIMFGHDEIKRLIAFQEEIVQAVGKEKSEVKLYEVDADLNQAVREMAEEDMHSAIQVHEKHAREDAINEVKKRVIEHYEAQEADADTLGQVNEILYKIVKEEVRRLITVEKIRPDGRKGDEIRPLASEVGILSRTHGSGLFTRGQTQALSICTLGALGDVQILDGLGVEESKRFMHHYNFPSFSVGETRPMRGPGRREIGHGAIGERALEPVIPSEKDFPYTVRLVSEVLESNGSTSQASICGSTLAMMDAGVPLKAPVAGIAMGLVKTGEHYTILSDIQGMEDHLGDMDFKVAGTAQGVTALQMDIKIDGLSREILEEALQQAKVGRVHILNHMLSVIPEPRTELSAYAPKIITMTINPDKIRDVIGPSGKQINKIIEETGVKIDIEQDGTVFISSINQEMNDKAKKIIEDIVREVQVGEIYEAKVKRVEKFGAFVELFSGKDGLVHISELALERVGKVEDVVKIGDVITVKVIEIDKQGRVNLSRKVLLKEEQEKEAVKEENKQEQQ</sequence>
<reference key="1">
    <citation type="journal article" date="2003" name="Nature">
        <title>Genome sequence of Bacillus cereus and comparative analysis with Bacillus anthracis.</title>
        <authorList>
            <person name="Ivanova N."/>
            <person name="Sorokin A."/>
            <person name="Anderson I."/>
            <person name="Galleron N."/>
            <person name="Candelon B."/>
            <person name="Kapatral V."/>
            <person name="Bhattacharyya A."/>
            <person name="Reznik G."/>
            <person name="Mikhailova N."/>
            <person name="Lapidus A."/>
            <person name="Chu L."/>
            <person name="Mazur M."/>
            <person name="Goltsman E."/>
            <person name="Larsen N."/>
            <person name="D'Souza M."/>
            <person name="Walunas T."/>
            <person name="Grechkin Y."/>
            <person name="Pusch G."/>
            <person name="Haselkorn R."/>
            <person name="Fonstein M."/>
            <person name="Ehrlich S.D."/>
            <person name="Overbeek R."/>
            <person name="Kyrpides N.C."/>
        </authorList>
    </citation>
    <scope>NUCLEOTIDE SEQUENCE [LARGE SCALE GENOMIC DNA]</scope>
    <source>
        <strain>ATCC 14579 / DSM 31 / CCUG 7414 / JCM 2152 / NBRC 15305 / NCIMB 9373 / NCTC 2599 / NRRL B-3711</strain>
    </source>
</reference>